<protein>
    <recommendedName>
        <fullName evidence="1">Sugar fermentation stimulation protein homolog</fullName>
    </recommendedName>
</protein>
<organism>
    <name type="scientific">Pseudomonas putida (strain GB-1)</name>
    <dbReference type="NCBI Taxonomy" id="76869"/>
    <lineage>
        <taxon>Bacteria</taxon>
        <taxon>Pseudomonadati</taxon>
        <taxon>Pseudomonadota</taxon>
        <taxon>Gammaproteobacteria</taxon>
        <taxon>Pseudomonadales</taxon>
        <taxon>Pseudomonadaceae</taxon>
        <taxon>Pseudomonas</taxon>
    </lineage>
</organism>
<comment type="similarity">
    <text evidence="1">Belongs to the SfsA family.</text>
</comment>
<reference key="1">
    <citation type="submission" date="2008-01" db="EMBL/GenBank/DDBJ databases">
        <title>Complete sequence of Pseudomonas putida GB-1.</title>
        <authorList>
            <consortium name="US DOE Joint Genome Institute"/>
            <person name="Copeland A."/>
            <person name="Lucas S."/>
            <person name="Lapidus A."/>
            <person name="Barry K."/>
            <person name="Glavina del Rio T."/>
            <person name="Dalin E."/>
            <person name="Tice H."/>
            <person name="Pitluck S."/>
            <person name="Bruce D."/>
            <person name="Goodwin L."/>
            <person name="Chertkov O."/>
            <person name="Brettin T."/>
            <person name="Detter J.C."/>
            <person name="Han C."/>
            <person name="Kuske C.R."/>
            <person name="Schmutz J."/>
            <person name="Larimer F."/>
            <person name="Land M."/>
            <person name="Hauser L."/>
            <person name="Kyrpides N."/>
            <person name="Kim E."/>
            <person name="McCarthy J.K."/>
            <person name="Richardson P."/>
        </authorList>
    </citation>
    <scope>NUCLEOTIDE SEQUENCE [LARGE SCALE GENOMIC DNA]</scope>
    <source>
        <strain>GB-1</strain>
    </source>
</reference>
<evidence type="ECO:0000255" key="1">
    <source>
        <dbReference type="HAMAP-Rule" id="MF_00095"/>
    </source>
</evidence>
<feature type="chain" id="PRO_1000075543" description="Sugar fermentation stimulation protein homolog">
    <location>
        <begin position="1"/>
        <end position="237"/>
    </location>
</feature>
<name>SFSA_PSEPG</name>
<sequence length="237" mass="26091">MRFFPPLEQGRLLRRYKRFLADIELTSGEQMTIHCPNTGSMLNCMREGGLVWFSRSNDPKRKLPGTWEISETPQGRLACVNTGRANALVEEALRAGTIAELAGFTALKREVAYGEEGSRIDFRLEFDGAPVYVEVKSVTLGYPDTAVAAFPDAVTQRGAKHLRELAKLARQGVRAVQLYCVNLTDVEAVRPAEEIDAAYAQALRAAVADGVEVLAYGTRLDAEGIVIDRRLPVLLNP</sequence>
<gene>
    <name evidence="1" type="primary">sfsA</name>
    <name type="ordered locus">PputGB1_4689</name>
</gene>
<dbReference type="EMBL" id="CP000926">
    <property type="protein sequence ID" value="ABZ00576.1"/>
    <property type="molecule type" value="Genomic_DNA"/>
</dbReference>
<dbReference type="RefSeq" id="WP_012274222.1">
    <property type="nucleotide sequence ID" value="NC_010322.1"/>
</dbReference>
<dbReference type="SMR" id="B0KHV5"/>
<dbReference type="KEGG" id="ppg:PputGB1_4689"/>
<dbReference type="eggNOG" id="COG1489">
    <property type="taxonomic scope" value="Bacteria"/>
</dbReference>
<dbReference type="HOGENOM" id="CLU_052299_2_0_6"/>
<dbReference type="Proteomes" id="UP000002157">
    <property type="component" value="Chromosome"/>
</dbReference>
<dbReference type="GO" id="GO:0003677">
    <property type="term" value="F:DNA binding"/>
    <property type="evidence" value="ECO:0007669"/>
    <property type="project" value="InterPro"/>
</dbReference>
<dbReference type="CDD" id="cd22359">
    <property type="entry name" value="SfsA-like_bacterial"/>
    <property type="match status" value="1"/>
</dbReference>
<dbReference type="FunFam" id="2.40.50.580:FF:000001">
    <property type="entry name" value="Sugar fermentation stimulation protein A"/>
    <property type="match status" value="1"/>
</dbReference>
<dbReference type="FunFam" id="3.40.1350.60:FF:000001">
    <property type="entry name" value="Sugar fermentation stimulation protein A"/>
    <property type="match status" value="1"/>
</dbReference>
<dbReference type="Gene3D" id="2.40.50.580">
    <property type="match status" value="1"/>
</dbReference>
<dbReference type="Gene3D" id="3.40.1350.60">
    <property type="match status" value="1"/>
</dbReference>
<dbReference type="HAMAP" id="MF_00095">
    <property type="entry name" value="SfsA"/>
    <property type="match status" value="1"/>
</dbReference>
<dbReference type="InterPro" id="IPR005224">
    <property type="entry name" value="SfsA"/>
</dbReference>
<dbReference type="InterPro" id="IPR040452">
    <property type="entry name" value="SfsA_C"/>
</dbReference>
<dbReference type="InterPro" id="IPR041465">
    <property type="entry name" value="SfsA_N"/>
</dbReference>
<dbReference type="NCBIfam" id="TIGR00230">
    <property type="entry name" value="sfsA"/>
    <property type="match status" value="1"/>
</dbReference>
<dbReference type="PANTHER" id="PTHR30545">
    <property type="entry name" value="SUGAR FERMENTATION STIMULATION PROTEIN A"/>
    <property type="match status" value="1"/>
</dbReference>
<dbReference type="PANTHER" id="PTHR30545:SF2">
    <property type="entry name" value="SUGAR FERMENTATION STIMULATION PROTEIN A"/>
    <property type="match status" value="1"/>
</dbReference>
<dbReference type="Pfam" id="PF03749">
    <property type="entry name" value="SfsA"/>
    <property type="match status" value="1"/>
</dbReference>
<dbReference type="Pfam" id="PF17746">
    <property type="entry name" value="SfsA_N"/>
    <property type="match status" value="1"/>
</dbReference>
<proteinExistence type="inferred from homology"/>
<accession>B0KHV5</accession>